<comment type="function">
    <text evidence="1">One of the primary rRNA binding proteins, it binds directly to 16S rRNA where it nucleates assembly of the head domain of the 30S subunit. Is located at the subunit interface close to the decoding center, probably blocks exit of the E-site tRNA.</text>
</comment>
<comment type="subunit">
    <text evidence="1">Part of the 30S ribosomal subunit. Contacts proteins S9 and S11.</text>
</comment>
<comment type="similarity">
    <text evidence="1">Belongs to the universal ribosomal protein uS7 family.</text>
</comment>
<gene>
    <name evidence="1" type="primary">rpsG</name>
    <name type="ordered locus">A1S_0867</name>
</gene>
<sequence length="156" mass="17700">MPRRRVVAAREILPDPKFSSQTIAKFMNHVMQDGKKSIAESIVYGALERVQEKNKVDPVEFFETTLEKVRPMVEVKARRVGGATYQVPMEVRPSRRTALAMRWLVDAAAKRSEKTMALRLAGELLDAAEGKGAAIKKREDVHRMAEANKAFSHYRF</sequence>
<proteinExistence type="inferred from homology"/>
<reference key="1">
    <citation type="journal article" date="2007" name="Genes Dev.">
        <title>New insights into Acinetobacter baumannii pathogenesis revealed by high-density pyrosequencing and transposon mutagenesis.</title>
        <authorList>
            <person name="Smith M.G."/>
            <person name="Gianoulis T.A."/>
            <person name="Pukatzki S."/>
            <person name="Mekalanos J.J."/>
            <person name="Ornston L.N."/>
            <person name="Gerstein M."/>
            <person name="Snyder M."/>
        </authorList>
    </citation>
    <scope>NUCLEOTIDE SEQUENCE [LARGE SCALE GENOMIC DNA]</scope>
    <source>
        <strain>ATCC 17978 / DSM 105126 / CIP 53.77 / LMG 1025 / NCDC KC755 / 5377</strain>
    </source>
</reference>
<feature type="chain" id="PRO_0000344285" description="Small ribosomal subunit protein uS7">
    <location>
        <begin position="1"/>
        <end position="156"/>
    </location>
</feature>
<protein>
    <recommendedName>
        <fullName evidence="1">Small ribosomal subunit protein uS7</fullName>
    </recommendedName>
    <alternativeName>
        <fullName evidence="2">30S ribosomal protein S7</fullName>
    </alternativeName>
</protein>
<keyword id="KW-0687">Ribonucleoprotein</keyword>
<keyword id="KW-0689">Ribosomal protein</keyword>
<keyword id="KW-0694">RNA-binding</keyword>
<keyword id="KW-0699">rRNA-binding</keyword>
<keyword id="KW-0820">tRNA-binding</keyword>
<dbReference type="EMBL" id="CP000521">
    <property type="protein sequence ID" value="ABO11299.2"/>
    <property type="molecule type" value="Genomic_DNA"/>
</dbReference>
<dbReference type="RefSeq" id="WP_001138055.1">
    <property type="nucleotide sequence ID" value="NZ_CP053098.1"/>
</dbReference>
<dbReference type="SMR" id="A3M305"/>
<dbReference type="GeneID" id="92892796"/>
<dbReference type="KEGG" id="acb:A1S_0867"/>
<dbReference type="HOGENOM" id="CLU_072226_1_1_6"/>
<dbReference type="GO" id="GO:0015935">
    <property type="term" value="C:small ribosomal subunit"/>
    <property type="evidence" value="ECO:0007669"/>
    <property type="project" value="InterPro"/>
</dbReference>
<dbReference type="GO" id="GO:0019843">
    <property type="term" value="F:rRNA binding"/>
    <property type="evidence" value="ECO:0007669"/>
    <property type="project" value="UniProtKB-UniRule"/>
</dbReference>
<dbReference type="GO" id="GO:0003735">
    <property type="term" value="F:structural constituent of ribosome"/>
    <property type="evidence" value="ECO:0007669"/>
    <property type="project" value="InterPro"/>
</dbReference>
<dbReference type="GO" id="GO:0000049">
    <property type="term" value="F:tRNA binding"/>
    <property type="evidence" value="ECO:0007669"/>
    <property type="project" value="UniProtKB-UniRule"/>
</dbReference>
<dbReference type="GO" id="GO:0006412">
    <property type="term" value="P:translation"/>
    <property type="evidence" value="ECO:0007669"/>
    <property type="project" value="UniProtKB-UniRule"/>
</dbReference>
<dbReference type="CDD" id="cd14869">
    <property type="entry name" value="uS7_Bacteria"/>
    <property type="match status" value="1"/>
</dbReference>
<dbReference type="FunFam" id="1.10.455.10:FF:000001">
    <property type="entry name" value="30S ribosomal protein S7"/>
    <property type="match status" value="1"/>
</dbReference>
<dbReference type="Gene3D" id="1.10.455.10">
    <property type="entry name" value="Ribosomal protein S7 domain"/>
    <property type="match status" value="1"/>
</dbReference>
<dbReference type="HAMAP" id="MF_00480_B">
    <property type="entry name" value="Ribosomal_uS7_B"/>
    <property type="match status" value="1"/>
</dbReference>
<dbReference type="InterPro" id="IPR000235">
    <property type="entry name" value="Ribosomal_uS7"/>
</dbReference>
<dbReference type="InterPro" id="IPR005717">
    <property type="entry name" value="Ribosomal_uS7_bac/org-type"/>
</dbReference>
<dbReference type="InterPro" id="IPR020606">
    <property type="entry name" value="Ribosomal_uS7_CS"/>
</dbReference>
<dbReference type="InterPro" id="IPR023798">
    <property type="entry name" value="Ribosomal_uS7_dom"/>
</dbReference>
<dbReference type="InterPro" id="IPR036823">
    <property type="entry name" value="Ribosomal_uS7_dom_sf"/>
</dbReference>
<dbReference type="NCBIfam" id="TIGR01029">
    <property type="entry name" value="rpsG_bact"/>
    <property type="match status" value="1"/>
</dbReference>
<dbReference type="PANTHER" id="PTHR11205">
    <property type="entry name" value="RIBOSOMAL PROTEIN S7"/>
    <property type="match status" value="1"/>
</dbReference>
<dbReference type="Pfam" id="PF00177">
    <property type="entry name" value="Ribosomal_S7"/>
    <property type="match status" value="1"/>
</dbReference>
<dbReference type="PIRSF" id="PIRSF002122">
    <property type="entry name" value="RPS7p_RPS7a_RPS5e_RPS7o"/>
    <property type="match status" value="1"/>
</dbReference>
<dbReference type="SUPFAM" id="SSF47973">
    <property type="entry name" value="Ribosomal protein S7"/>
    <property type="match status" value="1"/>
</dbReference>
<dbReference type="PROSITE" id="PS00052">
    <property type="entry name" value="RIBOSOMAL_S7"/>
    <property type="match status" value="1"/>
</dbReference>
<name>RS7_ACIBT</name>
<accession>A3M305</accession>
<organism>
    <name type="scientific">Acinetobacter baumannii (strain ATCC 17978 / DSM 105126 / CIP 53.77 / LMG 1025 / NCDC KC755 / 5377)</name>
    <dbReference type="NCBI Taxonomy" id="400667"/>
    <lineage>
        <taxon>Bacteria</taxon>
        <taxon>Pseudomonadati</taxon>
        <taxon>Pseudomonadota</taxon>
        <taxon>Gammaproteobacteria</taxon>
        <taxon>Moraxellales</taxon>
        <taxon>Moraxellaceae</taxon>
        <taxon>Acinetobacter</taxon>
        <taxon>Acinetobacter calcoaceticus/baumannii complex</taxon>
    </lineage>
</organism>
<evidence type="ECO:0000255" key="1">
    <source>
        <dbReference type="HAMAP-Rule" id="MF_00480"/>
    </source>
</evidence>
<evidence type="ECO:0000305" key="2"/>